<sequence length="58" mass="5968">MLGWTLTFLVIALVAGVLGFTGIAGAAAGIAKIIFFVFVVLLLISLVSRALSGKPPRP</sequence>
<comment type="subcellular location">
    <subcellularLocation>
        <location evidence="1">Cell membrane</location>
        <topology evidence="1">Multi-pass membrane protein</topology>
    </subcellularLocation>
</comment>
<comment type="similarity">
    <text evidence="1">Belongs to the UPF0391 family.</text>
</comment>
<organism>
    <name type="scientific">Shewanella denitrificans (strain OS217 / ATCC BAA-1090 / DSM 15013)</name>
    <dbReference type="NCBI Taxonomy" id="318161"/>
    <lineage>
        <taxon>Bacteria</taxon>
        <taxon>Pseudomonadati</taxon>
        <taxon>Pseudomonadota</taxon>
        <taxon>Gammaproteobacteria</taxon>
        <taxon>Alteromonadales</taxon>
        <taxon>Shewanellaceae</taxon>
        <taxon>Shewanella</taxon>
    </lineage>
</organism>
<feature type="chain" id="PRO_5000115019" description="UPF0391 membrane protein Sden_3712">
    <location>
        <begin position="1"/>
        <end position="58"/>
    </location>
</feature>
<feature type="transmembrane region" description="Helical" evidence="1">
    <location>
        <begin position="6"/>
        <end position="26"/>
    </location>
</feature>
<feature type="transmembrane region" description="Helical" evidence="1">
    <location>
        <begin position="27"/>
        <end position="47"/>
    </location>
</feature>
<evidence type="ECO:0000255" key="1">
    <source>
        <dbReference type="HAMAP-Rule" id="MF_01361"/>
    </source>
</evidence>
<dbReference type="EMBL" id="CP000302">
    <property type="protein sequence ID" value="ABE56985.1"/>
    <property type="molecule type" value="Genomic_DNA"/>
</dbReference>
<dbReference type="RefSeq" id="WP_011498123.1">
    <property type="nucleotide sequence ID" value="NC_007954.1"/>
</dbReference>
<dbReference type="STRING" id="318161.Sden_3712"/>
<dbReference type="KEGG" id="sdn:Sden_3712"/>
<dbReference type="eggNOG" id="COG5487">
    <property type="taxonomic scope" value="Bacteria"/>
</dbReference>
<dbReference type="HOGENOM" id="CLU_187346_1_0_6"/>
<dbReference type="Proteomes" id="UP000001982">
    <property type="component" value="Chromosome"/>
</dbReference>
<dbReference type="GO" id="GO:0005886">
    <property type="term" value="C:plasma membrane"/>
    <property type="evidence" value="ECO:0007669"/>
    <property type="project" value="UniProtKB-SubCell"/>
</dbReference>
<dbReference type="HAMAP" id="MF_01361">
    <property type="entry name" value="UPF0391"/>
    <property type="match status" value="1"/>
</dbReference>
<dbReference type="InterPro" id="IPR009760">
    <property type="entry name" value="DUF1328"/>
</dbReference>
<dbReference type="NCBIfam" id="NF010226">
    <property type="entry name" value="PRK13682.1-1"/>
    <property type="match status" value="1"/>
</dbReference>
<dbReference type="NCBIfam" id="NF010228">
    <property type="entry name" value="PRK13682.1-3"/>
    <property type="match status" value="1"/>
</dbReference>
<dbReference type="NCBIfam" id="NF010229">
    <property type="entry name" value="PRK13682.1-4"/>
    <property type="match status" value="1"/>
</dbReference>
<dbReference type="Pfam" id="PF07043">
    <property type="entry name" value="DUF1328"/>
    <property type="match status" value="1"/>
</dbReference>
<dbReference type="PIRSF" id="PIRSF036466">
    <property type="entry name" value="UCP036466"/>
    <property type="match status" value="1"/>
</dbReference>
<reference key="1">
    <citation type="submission" date="2006-03" db="EMBL/GenBank/DDBJ databases">
        <title>Complete sequence of Shewanella denitrificans OS217.</title>
        <authorList>
            <consortium name="US DOE Joint Genome Institute"/>
            <person name="Copeland A."/>
            <person name="Lucas S."/>
            <person name="Lapidus A."/>
            <person name="Barry K."/>
            <person name="Detter J.C."/>
            <person name="Glavina del Rio T."/>
            <person name="Hammon N."/>
            <person name="Israni S."/>
            <person name="Dalin E."/>
            <person name="Tice H."/>
            <person name="Pitluck S."/>
            <person name="Brettin T."/>
            <person name="Bruce D."/>
            <person name="Han C."/>
            <person name="Tapia R."/>
            <person name="Gilna P."/>
            <person name="Kiss H."/>
            <person name="Schmutz J."/>
            <person name="Larimer F."/>
            <person name="Land M."/>
            <person name="Hauser L."/>
            <person name="Kyrpides N."/>
            <person name="Lykidis A."/>
            <person name="Richardson P."/>
        </authorList>
    </citation>
    <scope>NUCLEOTIDE SEQUENCE [LARGE SCALE GENOMIC DNA]</scope>
    <source>
        <strain>OS217 / ATCC BAA-1090 / DSM 15013</strain>
    </source>
</reference>
<protein>
    <recommendedName>
        <fullName evidence="1">UPF0391 membrane protein Sden_3712</fullName>
    </recommendedName>
</protein>
<name>Y3712_SHEDO</name>
<accession>Q12HU1</accession>
<proteinExistence type="inferred from homology"/>
<gene>
    <name type="ordered locus">Sden_3712</name>
</gene>
<keyword id="KW-1003">Cell membrane</keyword>
<keyword id="KW-0472">Membrane</keyword>
<keyword id="KW-1185">Reference proteome</keyword>
<keyword id="KW-0812">Transmembrane</keyword>
<keyword id="KW-1133">Transmembrane helix</keyword>